<dbReference type="EMBL" id="DS231698">
    <property type="protein sequence ID" value="KNA98383.1"/>
    <property type="status" value="ALT_SEQ"/>
    <property type="molecule type" value="Genomic_DNA"/>
</dbReference>
<dbReference type="EMBL" id="DS231698">
    <property type="protein sequence ID" value="KNA98382.1"/>
    <property type="molecule type" value="Genomic_DNA"/>
</dbReference>
<dbReference type="RefSeq" id="XP_018236428.1">
    <property type="nucleotide sequence ID" value="XM_018380209.1"/>
</dbReference>
<dbReference type="GeneID" id="28944921"/>
<dbReference type="KEGG" id="fox:FOXG_02748"/>
<dbReference type="VEuPathDB" id="FungiDB:FOXG_02748"/>
<dbReference type="OMA" id="TDPIKPD"/>
<dbReference type="OrthoDB" id="141554at110618"/>
<dbReference type="Proteomes" id="UP000009097">
    <property type="component" value="Unassembled WGS sequence"/>
</dbReference>
<dbReference type="GO" id="GO:0005576">
    <property type="term" value="C:extracellular region"/>
    <property type="evidence" value="ECO:0007669"/>
    <property type="project" value="UniProtKB-KW"/>
</dbReference>
<dbReference type="CDD" id="cd23508">
    <property type="entry name" value="hydrophobin_II"/>
    <property type="match status" value="1"/>
</dbReference>
<dbReference type="Gene3D" id="3.20.120.10">
    <property type="entry name" value="Hydrophobin"/>
    <property type="match status" value="1"/>
</dbReference>
<dbReference type="InterPro" id="IPR010636">
    <property type="entry name" value="Cerato-ulmin_hydrophobin"/>
</dbReference>
<dbReference type="InterPro" id="IPR036686">
    <property type="entry name" value="Hydrophobin_sf"/>
</dbReference>
<dbReference type="PANTHER" id="PTHR42341">
    <property type="entry name" value="HYDROPHOBIN"/>
    <property type="match status" value="1"/>
</dbReference>
<dbReference type="PANTHER" id="PTHR42341:SF1">
    <property type="entry name" value="HYDROPHOBIN"/>
    <property type="match status" value="1"/>
</dbReference>
<dbReference type="Pfam" id="PF06766">
    <property type="entry name" value="Hydrophobin_2"/>
    <property type="match status" value="1"/>
</dbReference>
<dbReference type="SUPFAM" id="SSF101751">
    <property type="entry name" value="Hydrophobin II, HfbII"/>
    <property type="match status" value="1"/>
</dbReference>
<name>HYD48_FUSO4</name>
<protein>
    <recommendedName>
        <fullName evidence="4">Class II hydrophobin FOXG_02748</fullName>
    </recommendedName>
</protein>
<comment type="function">
    <text evidence="3 5">Aerial growth, conidiation, and dispersal of filamentous fungi in the environment rely upon a capability of their secreting small amphipathic proteins called hydrophobins (HPBs) with low sequence identity. Class I can self-assemble into an outermost layer of rodlet bundles on aerial cell surfaces, conferring cellular hydrophobicity that supports fungal growth, development and dispersal; whereas Class II form highly ordered films at water-air interfaces through intermolecular interactions but contribute nothing to the rodlet structure (Probable). FOXG_02748 is a class II hydrophobin that is likely required for plant colonization (PubMed:36986302).</text>
</comment>
<comment type="subunit">
    <text evidence="1">Homodimer (By similarity). Homodimers further self-assemble to form highly ordered films at water-air interfaces through intermolecular interactions (By similarity).</text>
</comment>
<comment type="subcellular location">
    <subcellularLocation>
        <location evidence="1">Secreted</location>
    </subcellularLocation>
    <subcellularLocation>
        <location evidence="1">Secreted</location>
        <location evidence="1">Cell wall</location>
    </subcellularLocation>
</comment>
<comment type="induction">
    <text evidence="3">Expression occurs in the early stages of infection and is directly regulated by the transcription factor FTF2.</text>
</comment>
<comment type="similarity">
    <text evidence="5">Belongs to the cerato-ulmin hydrophobin family.</text>
</comment>
<comment type="sequence caution" evidence="5">
    <conflict type="erroneous gene model prediction">
        <sequence resource="EMBL-CDS" id="KNA98383"/>
    </conflict>
</comment>
<evidence type="ECO:0000250" key="1">
    <source>
        <dbReference type="UniProtKB" id="P79073"/>
    </source>
</evidence>
<evidence type="ECO:0000255" key="2"/>
<evidence type="ECO:0000269" key="3">
    <source>
    </source>
</evidence>
<evidence type="ECO:0000303" key="4">
    <source>
    </source>
</evidence>
<evidence type="ECO:0000305" key="5"/>
<sequence>MKSKSIMAASTVMELALAQASADPLCSTIINLQPIEYQFQQPVLIDSYFPANTDIVLDDGHVVHVTNAPTSLSTVLTDVSTSSTTLTSSASNGNGNPPDGGYLTFTVPANPDDIGNHPVTKTYPPTEPGQPGIVVIQVPTSPPGADGIPTSSVPYVTVTTTGDFPSLTGPVTTTVTPGEPGATGSVIIEVPNTKITSPSASYVTVTTPGSVAPTDAPRTSTIPPSNPTDPGTVIVVVPSSQASSVSSIPFVTVTTTGSTLNPTDDPITSTISPSGSTGSGTVIVEVPPSSSPSGSGASSSPVSVVTRTVTGDDGNGEPSTTTITPTASSGPGTVIVEVPPPTNSPSATSPGSSRPGGPGSSGTGSSASQGPSDSAALSSSTGDAGPSSSVPETSSPSRATTDDAASSTSASAPASSSAASSITQSETPSSAGAETSTPATSPASSSAPSTSDADTSSPVNPTTSSPASSAATSAPGSSTESAPSSSTSSAAANFDPCPDSLYGNPQCCSVDVLGVADVECDSPTESPTDADNFQAICAASGQRARCCVLPVLGQALVCLTPVGVSN</sequence>
<gene>
    <name type="ORF">FOXG_02748</name>
</gene>
<organism>
    <name type="scientific">Fusarium oxysporum f. sp. lycopersici (strain 4287 / CBS 123668 / FGSC 9935 / NRRL 34936)</name>
    <name type="common">Fusarium vascular wilt of tomato</name>
    <dbReference type="NCBI Taxonomy" id="426428"/>
    <lineage>
        <taxon>Eukaryota</taxon>
        <taxon>Fungi</taxon>
        <taxon>Dikarya</taxon>
        <taxon>Ascomycota</taxon>
        <taxon>Pezizomycotina</taxon>
        <taxon>Sordariomycetes</taxon>
        <taxon>Hypocreomycetidae</taxon>
        <taxon>Hypocreales</taxon>
        <taxon>Nectriaceae</taxon>
        <taxon>Fusarium</taxon>
        <taxon>Fusarium oxysporum species complex</taxon>
    </lineage>
</organism>
<reference key="1">
    <citation type="journal article" date="2010" name="Nature">
        <title>Comparative genomics reveals mobile pathogenicity chromosomes in Fusarium.</title>
        <authorList>
            <person name="Ma L.-J."/>
            <person name="van der Does H.C."/>
            <person name="Borkovich K.A."/>
            <person name="Coleman J.J."/>
            <person name="Daboussi M.-J."/>
            <person name="Di Pietro A."/>
            <person name="Dufresne M."/>
            <person name="Freitag M."/>
            <person name="Grabherr M."/>
            <person name="Henrissat B."/>
            <person name="Houterman P.M."/>
            <person name="Kang S."/>
            <person name="Shim W.-B."/>
            <person name="Woloshuk C."/>
            <person name="Xie X."/>
            <person name="Xu J.-R."/>
            <person name="Antoniw J."/>
            <person name="Baker S.E."/>
            <person name="Bluhm B.H."/>
            <person name="Breakspear A."/>
            <person name="Brown D.W."/>
            <person name="Butchko R.A.E."/>
            <person name="Chapman S."/>
            <person name="Coulson R."/>
            <person name="Coutinho P.M."/>
            <person name="Danchin E.G.J."/>
            <person name="Diener A."/>
            <person name="Gale L.R."/>
            <person name="Gardiner D.M."/>
            <person name="Goff S."/>
            <person name="Hammond-Kosack K.E."/>
            <person name="Hilburn K."/>
            <person name="Hua-Van A."/>
            <person name="Jonkers W."/>
            <person name="Kazan K."/>
            <person name="Kodira C.D."/>
            <person name="Koehrsen M."/>
            <person name="Kumar L."/>
            <person name="Lee Y.-H."/>
            <person name="Li L."/>
            <person name="Manners J.M."/>
            <person name="Miranda-Saavedra D."/>
            <person name="Mukherjee M."/>
            <person name="Park G."/>
            <person name="Park J."/>
            <person name="Park S.-Y."/>
            <person name="Proctor R.H."/>
            <person name="Regev A."/>
            <person name="Ruiz-Roldan M.C."/>
            <person name="Sain D."/>
            <person name="Sakthikumar S."/>
            <person name="Sykes S."/>
            <person name="Schwartz D.C."/>
            <person name="Turgeon B.G."/>
            <person name="Wapinski I."/>
            <person name="Yoder O."/>
            <person name="Young S."/>
            <person name="Zeng Q."/>
            <person name="Zhou S."/>
            <person name="Galagan J."/>
            <person name="Cuomo C.A."/>
            <person name="Kistler H.C."/>
            <person name="Rep M."/>
        </authorList>
    </citation>
    <scope>NUCLEOTIDE SEQUENCE [LARGE SCALE GENOMIC DNA]</scope>
    <source>
        <strain>4287 / CBS 123668 / FGSC 9935 / NRRL 34936</strain>
    </source>
</reference>
<reference key="2">
    <citation type="journal article" date="2023" name="Pathogens">
        <title>The Role of the Fusarium oxysporum FTF2 Transcription Factor in Host Colonization and Virulence in Common Bean Plants (Phaseolus vulgaris L.).</title>
        <authorList>
            <person name="Casado-Del Castillo V."/>
            <person name="Benito E.P."/>
            <person name="Diaz-Minguez J.M."/>
        </authorList>
    </citation>
    <scope>INDUCTION</scope>
    <scope>FUNCTION</scope>
</reference>
<feature type="signal peptide" evidence="2">
    <location>
        <begin position="1"/>
        <end position="22"/>
    </location>
</feature>
<feature type="chain" id="PRO_5005324143" description="Class II hydrophobin FOXG_02748">
    <location>
        <begin position="23"/>
        <end position="566"/>
    </location>
</feature>
<feature type="disulfide bond" evidence="1">
    <location>
        <begin position="497"/>
        <end position="546"/>
    </location>
</feature>
<feature type="disulfide bond" evidence="1">
    <location>
        <begin position="507"/>
        <end position="537"/>
    </location>
</feature>
<feature type="disulfide bond" evidence="1">
    <location>
        <begin position="508"/>
        <end position="520"/>
    </location>
</feature>
<feature type="disulfide bond" evidence="1">
    <location>
        <begin position="547"/>
        <end position="558"/>
    </location>
</feature>
<accession>A0A0J9UHQ6</accession>
<accession>A0A0J9UG48</accession>
<keyword id="KW-0134">Cell wall</keyword>
<keyword id="KW-1015">Disulfide bond</keyword>
<keyword id="KW-1185">Reference proteome</keyword>
<keyword id="KW-0964">Secreted</keyword>
<keyword id="KW-0732">Signal</keyword>
<keyword id="KW-0843">Virulence</keyword>
<proteinExistence type="evidence at transcript level"/>